<keyword id="KW-0067">ATP-binding</keyword>
<keyword id="KW-0143">Chaperone</keyword>
<keyword id="KW-0963">Cytoplasm</keyword>
<keyword id="KW-0413">Isomerase</keyword>
<keyword id="KW-0547">Nucleotide-binding</keyword>
<keyword id="KW-1185">Reference proteome</keyword>
<sequence>MAAKDVIFGGEARARMVEGVNILANAVKVTLGPKGRNVVLERSFGAPTVTKDGVSVAKEIELKDKLQNMGAQMVKEVASKTSDIAGDGTTTATVLAQAIVREGMKYVAAGMNPMDLKRGIDKAVTALVEELKKASKATTTSKEIAQVGSISANSDEAIGKIIADAMDKVGKEGVITVEDGKSLESELDVVEGMQFDRGYLSPYFINNPEKQSAILDNPFVLLYDKKISNIRDLLPTLEQVAKAGRPLLIIAEEVEGEALATLVVNTLRGILKVVAVKAPGFGDRRKAMLEDIACLTGGKVIAEEVGMSLEKVTLADLGTAKRIEVGKENTIIIDGAGEAKDIEARVKQVRVQIEEATSDYDREKLQERVAKLAGGVAVIKVGAATEVEMKEKKARVEDALHATRAAVEEGIVAGGGVALLRAKQAAGAIKGDNADQEAGIKLVLRAIEAPLREIVYNAGGEASVVVNAVLAGKGNYGFNAANDTYGDMIEMGILDPTKVTRTALQNAASVASLMLTTEAMVAEAPKDESGAGGGMPGGMGGMGGMGDMGM</sequence>
<name>CH60_POLSJ</name>
<protein>
    <recommendedName>
        <fullName evidence="1">Chaperonin GroEL</fullName>
        <ecNumber evidence="1">5.6.1.7</ecNumber>
    </recommendedName>
    <alternativeName>
        <fullName evidence="1">60 kDa chaperonin</fullName>
    </alternativeName>
    <alternativeName>
        <fullName evidence="1">Chaperonin-60</fullName>
        <shortName evidence="1">Cpn60</shortName>
    </alternativeName>
</protein>
<organism>
    <name type="scientific">Polaromonas sp. (strain JS666 / ATCC BAA-500)</name>
    <dbReference type="NCBI Taxonomy" id="296591"/>
    <lineage>
        <taxon>Bacteria</taxon>
        <taxon>Pseudomonadati</taxon>
        <taxon>Pseudomonadota</taxon>
        <taxon>Betaproteobacteria</taxon>
        <taxon>Burkholderiales</taxon>
        <taxon>Comamonadaceae</taxon>
        <taxon>Polaromonas</taxon>
    </lineage>
</organism>
<dbReference type="EC" id="5.6.1.7" evidence="1"/>
<dbReference type="EMBL" id="CP000316">
    <property type="protein sequence ID" value="ABE42715.1"/>
    <property type="molecule type" value="Genomic_DNA"/>
</dbReference>
<dbReference type="RefSeq" id="WP_011481718.1">
    <property type="nucleotide sequence ID" value="NC_007948.1"/>
</dbReference>
<dbReference type="SMR" id="Q12FH7"/>
<dbReference type="STRING" id="296591.Bpro_0759"/>
<dbReference type="KEGG" id="pol:Bpro_0759"/>
<dbReference type="eggNOG" id="COG0459">
    <property type="taxonomic scope" value="Bacteria"/>
</dbReference>
<dbReference type="HOGENOM" id="CLU_016503_3_0_4"/>
<dbReference type="OrthoDB" id="9766614at2"/>
<dbReference type="Proteomes" id="UP000001983">
    <property type="component" value="Chromosome"/>
</dbReference>
<dbReference type="GO" id="GO:0005737">
    <property type="term" value="C:cytoplasm"/>
    <property type="evidence" value="ECO:0007669"/>
    <property type="project" value="UniProtKB-SubCell"/>
</dbReference>
<dbReference type="GO" id="GO:0005524">
    <property type="term" value="F:ATP binding"/>
    <property type="evidence" value="ECO:0007669"/>
    <property type="project" value="UniProtKB-UniRule"/>
</dbReference>
<dbReference type="GO" id="GO:0140662">
    <property type="term" value="F:ATP-dependent protein folding chaperone"/>
    <property type="evidence" value="ECO:0007669"/>
    <property type="project" value="InterPro"/>
</dbReference>
<dbReference type="GO" id="GO:0016853">
    <property type="term" value="F:isomerase activity"/>
    <property type="evidence" value="ECO:0007669"/>
    <property type="project" value="UniProtKB-KW"/>
</dbReference>
<dbReference type="GO" id="GO:0051082">
    <property type="term" value="F:unfolded protein binding"/>
    <property type="evidence" value="ECO:0007669"/>
    <property type="project" value="UniProtKB-UniRule"/>
</dbReference>
<dbReference type="GO" id="GO:0042026">
    <property type="term" value="P:protein refolding"/>
    <property type="evidence" value="ECO:0007669"/>
    <property type="project" value="UniProtKB-UniRule"/>
</dbReference>
<dbReference type="CDD" id="cd03344">
    <property type="entry name" value="GroEL"/>
    <property type="match status" value="1"/>
</dbReference>
<dbReference type="FunFam" id="1.10.560.10:FF:000001">
    <property type="entry name" value="60 kDa chaperonin"/>
    <property type="match status" value="1"/>
</dbReference>
<dbReference type="FunFam" id="3.50.7.10:FF:000001">
    <property type="entry name" value="60 kDa chaperonin"/>
    <property type="match status" value="1"/>
</dbReference>
<dbReference type="Gene3D" id="3.50.7.10">
    <property type="entry name" value="GroEL"/>
    <property type="match status" value="1"/>
</dbReference>
<dbReference type="Gene3D" id="1.10.560.10">
    <property type="entry name" value="GroEL-like equatorial domain"/>
    <property type="match status" value="1"/>
</dbReference>
<dbReference type="Gene3D" id="3.30.260.10">
    <property type="entry name" value="TCP-1-like chaperonin intermediate domain"/>
    <property type="match status" value="1"/>
</dbReference>
<dbReference type="HAMAP" id="MF_00600">
    <property type="entry name" value="CH60"/>
    <property type="match status" value="1"/>
</dbReference>
<dbReference type="InterPro" id="IPR018370">
    <property type="entry name" value="Chaperonin_Cpn60_CS"/>
</dbReference>
<dbReference type="InterPro" id="IPR001844">
    <property type="entry name" value="Cpn60/GroEL"/>
</dbReference>
<dbReference type="InterPro" id="IPR002423">
    <property type="entry name" value="Cpn60/GroEL/TCP-1"/>
</dbReference>
<dbReference type="InterPro" id="IPR027409">
    <property type="entry name" value="GroEL-like_apical_dom_sf"/>
</dbReference>
<dbReference type="InterPro" id="IPR027413">
    <property type="entry name" value="GROEL-like_equatorial_sf"/>
</dbReference>
<dbReference type="InterPro" id="IPR027410">
    <property type="entry name" value="TCP-1-like_intermed_sf"/>
</dbReference>
<dbReference type="NCBIfam" id="TIGR02348">
    <property type="entry name" value="GroEL"/>
    <property type="match status" value="1"/>
</dbReference>
<dbReference type="NCBIfam" id="NF000592">
    <property type="entry name" value="PRK00013.1"/>
    <property type="match status" value="1"/>
</dbReference>
<dbReference type="NCBIfam" id="NF009487">
    <property type="entry name" value="PRK12849.1"/>
    <property type="match status" value="1"/>
</dbReference>
<dbReference type="NCBIfam" id="NF009488">
    <property type="entry name" value="PRK12850.1"/>
    <property type="match status" value="1"/>
</dbReference>
<dbReference type="NCBIfam" id="NF009489">
    <property type="entry name" value="PRK12851.1"/>
    <property type="match status" value="1"/>
</dbReference>
<dbReference type="PANTHER" id="PTHR45633">
    <property type="entry name" value="60 KDA HEAT SHOCK PROTEIN, MITOCHONDRIAL"/>
    <property type="match status" value="1"/>
</dbReference>
<dbReference type="Pfam" id="PF00118">
    <property type="entry name" value="Cpn60_TCP1"/>
    <property type="match status" value="1"/>
</dbReference>
<dbReference type="PRINTS" id="PR00298">
    <property type="entry name" value="CHAPERONIN60"/>
</dbReference>
<dbReference type="SUPFAM" id="SSF52029">
    <property type="entry name" value="GroEL apical domain-like"/>
    <property type="match status" value="1"/>
</dbReference>
<dbReference type="SUPFAM" id="SSF48592">
    <property type="entry name" value="GroEL equatorial domain-like"/>
    <property type="match status" value="1"/>
</dbReference>
<dbReference type="SUPFAM" id="SSF54849">
    <property type="entry name" value="GroEL-intermediate domain like"/>
    <property type="match status" value="1"/>
</dbReference>
<dbReference type="PROSITE" id="PS00296">
    <property type="entry name" value="CHAPERONINS_CPN60"/>
    <property type="match status" value="1"/>
</dbReference>
<gene>
    <name evidence="1" type="primary">groEL</name>
    <name evidence="1" type="synonym">groL</name>
    <name type="ordered locus">Bpro_0759</name>
</gene>
<comment type="function">
    <text evidence="1">Together with its co-chaperonin GroES, plays an essential role in assisting protein folding. The GroEL-GroES system forms a nano-cage that allows encapsulation of the non-native substrate proteins and provides a physical environment optimized to promote and accelerate protein folding.</text>
</comment>
<comment type="catalytic activity">
    <reaction evidence="1">
        <text>ATP + H2O + a folded polypeptide = ADP + phosphate + an unfolded polypeptide.</text>
        <dbReference type="EC" id="5.6.1.7"/>
    </reaction>
</comment>
<comment type="subunit">
    <text evidence="1">Forms a cylinder of 14 subunits composed of two heptameric rings stacked back-to-back. Interacts with the co-chaperonin GroES.</text>
</comment>
<comment type="subcellular location">
    <subcellularLocation>
        <location evidence="1">Cytoplasm</location>
    </subcellularLocation>
</comment>
<comment type="similarity">
    <text evidence="1">Belongs to the chaperonin (HSP60) family.</text>
</comment>
<reference key="1">
    <citation type="journal article" date="2008" name="Appl. Environ. Microbiol.">
        <title>The genome of Polaromonas sp. strain JS666: insights into the evolution of a hydrocarbon- and xenobiotic-degrading bacterium, and features of relevance to biotechnology.</title>
        <authorList>
            <person name="Mattes T.E."/>
            <person name="Alexander A.K."/>
            <person name="Richardson P.M."/>
            <person name="Munk A.C."/>
            <person name="Han C.S."/>
            <person name="Stothard P."/>
            <person name="Coleman N.V."/>
        </authorList>
    </citation>
    <scope>NUCLEOTIDE SEQUENCE [LARGE SCALE GENOMIC DNA]</scope>
    <source>
        <strain>JS666 / ATCC BAA-500</strain>
    </source>
</reference>
<evidence type="ECO:0000255" key="1">
    <source>
        <dbReference type="HAMAP-Rule" id="MF_00600"/>
    </source>
</evidence>
<proteinExistence type="inferred from homology"/>
<feature type="chain" id="PRO_0000256945" description="Chaperonin GroEL">
    <location>
        <begin position="1"/>
        <end position="550"/>
    </location>
</feature>
<feature type="binding site" evidence="1">
    <location>
        <begin position="30"/>
        <end position="33"/>
    </location>
    <ligand>
        <name>ATP</name>
        <dbReference type="ChEBI" id="CHEBI:30616"/>
    </ligand>
</feature>
<feature type="binding site" evidence="1">
    <location>
        <position position="51"/>
    </location>
    <ligand>
        <name>ATP</name>
        <dbReference type="ChEBI" id="CHEBI:30616"/>
    </ligand>
</feature>
<feature type="binding site" evidence="1">
    <location>
        <begin position="87"/>
        <end position="91"/>
    </location>
    <ligand>
        <name>ATP</name>
        <dbReference type="ChEBI" id="CHEBI:30616"/>
    </ligand>
</feature>
<feature type="binding site" evidence="1">
    <location>
        <position position="415"/>
    </location>
    <ligand>
        <name>ATP</name>
        <dbReference type="ChEBI" id="CHEBI:30616"/>
    </ligand>
</feature>
<feature type="binding site" evidence="1">
    <location>
        <begin position="479"/>
        <end position="481"/>
    </location>
    <ligand>
        <name>ATP</name>
        <dbReference type="ChEBI" id="CHEBI:30616"/>
    </ligand>
</feature>
<feature type="binding site" evidence="1">
    <location>
        <position position="495"/>
    </location>
    <ligand>
        <name>ATP</name>
        <dbReference type="ChEBI" id="CHEBI:30616"/>
    </ligand>
</feature>
<accession>Q12FH7</accession>